<sequence>METVLYIAVFGALGCLSRYYLSGWVYELFGRAFPYGTFAVNIVGAFCIGLIMEFSLRSALVSPQLRIGLTIGFLGGLTTFSTFSYETFRLLEDGELLIASANVLFSVMTCLVFTWLGIIVAKAL</sequence>
<gene>
    <name evidence="1" type="primary">fluC</name>
    <name evidence="1" type="synonym">crcB</name>
    <name type="ordered locus">Gura_1258</name>
</gene>
<protein>
    <recommendedName>
        <fullName evidence="1">Fluoride-specific ion channel FluC</fullName>
    </recommendedName>
</protein>
<organism>
    <name type="scientific">Geotalea uraniireducens (strain Rf4)</name>
    <name type="common">Geobacter uraniireducens</name>
    <dbReference type="NCBI Taxonomy" id="351605"/>
    <lineage>
        <taxon>Bacteria</taxon>
        <taxon>Pseudomonadati</taxon>
        <taxon>Thermodesulfobacteriota</taxon>
        <taxon>Desulfuromonadia</taxon>
        <taxon>Geobacterales</taxon>
        <taxon>Geobacteraceae</taxon>
        <taxon>Geotalea</taxon>
    </lineage>
</organism>
<evidence type="ECO:0000255" key="1">
    <source>
        <dbReference type="HAMAP-Rule" id="MF_00454"/>
    </source>
</evidence>
<accession>A5GAD3</accession>
<name>FLUC_GEOUR</name>
<feature type="chain" id="PRO_1000206253" description="Fluoride-specific ion channel FluC">
    <location>
        <begin position="1"/>
        <end position="124"/>
    </location>
</feature>
<feature type="transmembrane region" description="Helical" evidence="1">
    <location>
        <begin position="4"/>
        <end position="24"/>
    </location>
</feature>
<feature type="transmembrane region" description="Helical" evidence="1">
    <location>
        <begin position="32"/>
        <end position="52"/>
    </location>
</feature>
<feature type="transmembrane region" description="Helical" evidence="1">
    <location>
        <begin position="67"/>
        <end position="87"/>
    </location>
</feature>
<feature type="transmembrane region" description="Helical" evidence="1">
    <location>
        <begin position="101"/>
        <end position="121"/>
    </location>
</feature>
<feature type="binding site" evidence="1">
    <location>
        <position position="75"/>
    </location>
    <ligand>
        <name>Na(+)</name>
        <dbReference type="ChEBI" id="CHEBI:29101"/>
        <note>structural</note>
    </ligand>
</feature>
<feature type="binding site" evidence="1">
    <location>
        <position position="78"/>
    </location>
    <ligand>
        <name>Na(+)</name>
        <dbReference type="ChEBI" id="CHEBI:29101"/>
        <note>structural</note>
    </ligand>
</feature>
<keyword id="KW-0997">Cell inner membrane</keyword>
<keyword id="KW-1003">Cell membrane</keyword>
<keyword id="KW-0407">Ion channel</keyword>
<keyword id="KW-0406">Ion transport</keyword>
<keyword id="KW-0472">Membrane</keyword>
<keyword id="KW-0479">Metal-binding</keyword>
<keyword id="KW-1185">Reference proteome</keyword>
<keyword id="KW-0915">Sodium</keyword>
<keyword id="KW-0812">Transmembrane</keyword>
<keyword id="KW-1133">Transmembrane helix</keyword>
<keyword id="KW-0813">Transport</keyword>
<dbReference type="EMBL" id="CP000698">
    <property type="protein sequence ID" value="ABQ25462.1"/>
    <property type="molecule type" value="Genomic_DNA"/>
</dbReference>
<dbReference type="RefSeq" id="WP_011938180.1">
    <property type="nucleotide sequence ID" value="NC_009483.1"/>
</dbReference>
<dbReference type="SMR" id="A5GAD3"/>
<dbReference type="STRING" id="351605.Gura_1258"/>
<dbReference type="KEGG" id="gur:Gura_1258"/>
<dbReference type="HOGENOM" id="CLU_114342_3_2_7"/>
<dbReference type="OrthoDB" id="9806299at2"/>
<dbReference type="Proteomes" id="UP000006695">
    <property type="component" value="Chromosome"/>
</dbReference>
<dbReference type="GO" id="GO:0005886">
    <property type="term" value="C:plasma membrane"/>
    <property type="evidence" value="ECO:0007669"/>
    <property type="project" value="UniProtKB-SubCell"/>
</dbReference>
<dbReference type="GO" id="GO:0062054">
    <property type="term" value="F:fluoride channel activity"/>
    <property type="evidence" value="ECO:0007669"/>
    <property type="project" value="UniProtKB-UniRule"/>
</dbReference>
<dbReference type="GO" id="GO:0046872">
    <property type="term" value="F:metal ion binding"/>
    <property type="evidence" value="ECO:0007669"/>
    <property type="project" value="UniProtKB-KW"/>
</dbReference>
<dbReference type="GO" id="GO:0140114">
    <property type="term" value="P:cellular detoxification of fluoride"/>
    <property type="evidence" value="ECO:0007669"/>
    <property type="project" value="UniProtKB-UniRule"/>
</dbReference>
<dbReference type="HAMAP" id="MF_00454">
    <property type="entry name" value="FluC"/>
    <property type="match status" value="1"/>
</dbReference>
<dbReference type="InterPro" id="IPR003691">
    <property type="entry name" value="FluC"/>
</dbReference>
<dbReference type="NCBIfam" id="TIGR00494">
    <property type="entry name" value="crcB"/>
    <property type="match status" value="1"/>
</dbReference>
<dbReference type="PANTHER" id="PTHR28259">
    <property type="entry name" value="FLUORIDE EXPORT PROTEIN 1-RELATED"/>
    <property type="match status" value="1"/>
</dbReference>
<dbReference type="PANTHER" id="PTHR28259:SF1">
    <property type="entry name" value="FLUORIDE EXPORT PROTEIN 1-RELATED"/>
    <property type="match status" value="1"/>
</dbReference>
<dbReference type="Pfam" id="PF02537">
    <property type="entry name" value="CRCB"/>
    <property type="match status" value="1"/>
</dbReference>
<proteinExistence type="inferred from homology"/>
<comment type="function">
    <text evidence="1">Fluoride-specific ion channel. Important for reducing fluoride concentration in the cell, thus reducing its toxicity.</text>
</comment>
<comment type="catalytic activity">
    <reaction evidence="1">
        <text>fluoride(in) = fluoride(out)</text>
        <dbReference type="Rhea" id="RHEA:76159"/>
        <dbReference type="ChEBI" id="CHEBI:17051"/>
    </reaction>
    <physiologicalReaction direction="left-to-right" evidence="1">
        <dbReference type="Rhea" id="RHEA:76160"/>
    </physiologicalReaction>
</comment>
<comment type="activity regulation">
    <text evidence="1">Na(+) is not transported, but it plays an essential structural role and its presence is essential for fluoride channel function.</text>
</comment>
<comment type="subcellular location">
    <subcellularLocation>
        <location evidence="1">Cell inner membrane</location>
        <topology evidence="1">Multi-pass membrane protein</topology>
    </subcellularLocation>
</comment>
<comment type="similarity">
    <text evidence="1">Belongs to the fluoride channel Fluc/FEX (TC 1.A.43) family.</text>
</comment>
<reference key="1">
    <citation type="submission" date="2007-05" db="EMBL/GenBank/DDBJ databases">
        <title>Complete sequence of Geobacter uraniireducens Rf4.</title>
        <authorList>
            <consortium name="US DOE Joint Genome Institute"/>
            <person name="Copeland A."/>
            <person name="Lucas S."/>
            <person name="Lapidus A."/>
            <person name="Barry K."/>
            <person name="Detter J.C."/>
            <person name="Glavina del Rio T."/>
            <person name="Hammon N."/>
            <person name="Israni S."/>
            <person name="Dalin E."/>
            <person name="Tice H."/>
            <person name="Pitluck S."/>
            <person name="Chertkov O."/>
            <person name="Brettin T."/>
            <person name="Bruce D."/>
            <person name="Han C."/>
            <person name="Schmutz J."/>
            <person name="Larimer F."/>
            <person name="Land M."/>
            <person name="Hauser L."/>
            <person name="Kyrpides N."/>
            <person name="Mikhailova N."/>
            <person name="Shelobolina E."/>
            <person name="Aklujkar M."/>
            <person name="Lovley D."/>
            <person name="Richardson P."/>
        </authorList>
    </citation>
    <scope>NUCLEOTIDE SEQUENCE [LARGE SCALE GENOMIC DNA]</scope>
    <source>
        <strain>ATCC BAA-1134 / JCM 13001 / Rf4</strain>
    </source>
</reference>